<proteinExistence type="inferred from homology"/>
<accession>B2I7L1</accession>
<reference key="1">
    <citation type="journal article" date="2010" name="J. Bacteriol.">
        <title>Whole genome sequences of two Xylella fastidiosa strains (M12 and M23) causing almond leaf scorch disease in California.</title>
        <authorList>
            <person name="Chen J."/>
            <person name="Xie G."/>
            <person name="Han S."/>
            <person name="Chertkov O."/>
            <person name="Sims D."/>
            <person name="Civerolo E.L."/>
        </authorList>
    </citation>
    <scope>NUCLEOTIDE SEQUENCE [LARGE SCALE GENOMIC DNA]</scope>
    <source>
        <strain>M23</strain>
    </source>
</reference>
<organism>
    <name type="scientific">Xylella fastidiosa (strain M23)</name>
    <dbReference type="NCBI Taxonomy" id="405441"/>
    <lineage>
        <taxon>Bacteria</taxon>
        <taxon>Pseudomonadati</taxon>
        <taxon>Pseudomonadota</taxon>
        <taxon>Gammaproteobacteria</taxon>
        <taxon>Lysobacterales</taxon>
        <taxon>Lysobacteraceae</taxon>
        <taxon>Xylella</taxon>
    </lineage>
</organism>
<feature type="chain" id="PRO_1000193717" description="Glutamate 5-kinase">
    <location>
        <begin position="1"/>
        <end position="384"/>
    </location>
</feature>
<feature type="domain" description="PUA" evidence="1">
    <location>
        <begin position="288"/>
        <end position="370"/>
    </location>
</feature>
<feature type="binding site" evidence="1">
    <location>
        <position position="24"/>
    </location>
    <ligand>
        <name>ATP</name>
        <dbReference type="ChEBI" id="CHEBI:30616"/>
    </ligand>
</feature>
<feature type="binding site" evidence="1">
    <location>
        <position position="64"/>
    </location>
    <ligand>
        <name>substrate</name>
    </ligand>
</feature>
<feature type="binding site" evidence="1">
    <location>
        <position position="149"/>
    </location>
    <ligand>
        <name>substrate</name>
    </ligand>
</feature>
<feature type="binding site" evidence="1">
    <location>
        <position position="161"/>
    </location>
    <ligand>
        <name>substrate</name>
    </ligand>
</feature>
<feature type="binding site" evidence="1">
    <location>
        <begin position="181"/>
        <end position="182"/>
    </location>
    <ligand>
        <name>ATP</name>
        <dbReference type="ChEBI" id="CHEBI:30616"/>
    </ligand>
</feature>
<feature type="binding site" evidence="1">
    <location>
        <begin position="223"/>
        <end position="229"/>
    </location>
    <ligand>
        <name>ATP</name>
        <dbReference type="ChEBI" id="CHEBI:30616"/>
    </ligand>
</feature>
<protein>
    <recommendedName>
        <fullName evidence="1">Glutamate 5-kinase</fullName>
        <ecNumber evidence="1">2.7.2.11</ecNumber>
    </recommendedName>
    <alternativeName>
        <fullName evidence="1">Gamma-glutamyl kinase</fullName>
        <shortName evidence="1">GK</shortName>
    </alternativeName>
</protein>
<dbReference type="EC" id="2.7.2.11" evidence="1"/>
<dbReference type="EMBL" id="CP001011">
    <property type="protein sequence ID" value="ACB91739.1"/>
    <property type="molecule type" value="Genomic_DNA"/>
</dbReference>
<dbReference type="RefSeq" id="WP_011097579.1">
    <property type="nucleotide sequence ID" value="NC_010577.1"/>
</dbReference>
<dbReference type="SMR" id="B2I7L1"/>
<dbReference type="GeneID" id="93903998"/>
<dbReference type="KEGG" id="xfn:XfasM23_0290"/>
<dbReference type="HOGENOM" id="CLU_025400_2_0_6"/>
<dbReference type="UniPathway" id="UPA00098">
    <property type="reaction ID" value="UER00359"/>
</dbReference>
<dbReference type="Proteomes" id="UP000001698">
    <property type="component" value="Chromosome"/>
</dbReference>
<dbReference type="GO" id="GO:0005829">
    <property type="term" value="C:cytosol"/>
    <property type="evidence" value="ECO:0007669"/>
    <property type="project" value="TreeGrafter"/>
</dbReference>
<dbReference type="GO" id="GO:0005524">
    <property type="term" value="F:ATP binding"/>
    <property type="evidence" value="ECO:0007669"/>
    <property type="project" value="UniProtKB-KW"/>
</dbReference>
<dbReference type="GO" id="GO:0004349">
    <property type="term" value="F:glutamate 5-kinase activity"/>
    <property type="evidence" value="ECO:0007669"/>
    <property type="project" value="UniProtKB-UniRule"/>
</dbReference>
<dbReference type="GO" id="GO:0003723">
    <property type="term" value="F:RNA binding"/>
    <property type="evidence" value="ECO:0007669"/>
    <property type="project" value="InterPro"/>
</dbReference>
<dbReference type="GO" id="GO:0055129">
    <property type="term" value="P:L-proline biosynthetic process"/>
    <property type="evidence" value="ECO:0007669"/>
    <property type="project" value="UniProtKB-UniRule"/>
</dbReference>
<dbReference type="CDD" id="cd04242">
    <property type="entry name" value="AAK_G5K_ProB"/>
    <property type="match status" value="1"/>
</dbReference>
<dbReference type="CDD" id="cd21157">
    <property type="entry name" value="PUA_G5K"/>
    <property type="match status" value="1"/>
</dbReference>
<dbReference type="FunFam" id="2.30.130.10:FF:000007">
    <property type="entry name" value="Glutamate 5-kinase"/>
    <property type="match status" value="1"/>
</dbReference>
<dbReference type="FunFam" id="3.40.1160.10:FF:000018">
    <property type="entry name" value="Glutamate 5-kinase"/>
    <property type="match status" value="1"/>
</dbReference>
<dbReference type="Gene3D" id="3.40.1160.10">
    <property type="entry name" value="Acetylglutamate kinase-like"/>
    <property type="match status" value="1"/>
</dbReference>
<dbReference type="Gene3D" id="2.30.130.10">
    <property type="entry name" value="PUA domain"/>
    <property type="match status" value="1"/>
</dbReference>
<dbReference type="HAMAP" id="MF_00456">
    <property type="entry name" value="ProB"/>
    <property type="match status" value="1"/>
</dbReference>
<dbReference type="InterPro" id="IPR036393">
    <property type="entry name" value="AceGlu_kinase-like_sf"/>
</dbReference>
<dbReference type="InterPro" id="IPR001048">
    <property type="entry name" value="Asp/Glu/Uridylate_kinase"/>
</dbReference>
<dbReference type="InterPro" id="IPR041739">
    <property type="entry name" value="G5K_ProB"/>
</dbReference>
<dbReference type="InterPro" id="IPR001057">
    <property type="entry name" value="Glu/AcGlu_kinase"/>
</dbReference>
<dbReference type="InterPro" id="IPR011529">
    <property type="entry name" value="Glu_5kinase"/>
</dbReference>
<dbReference type="InterPro" id="IPR005715">
    <property type="entry name" value="Glu_5kinase/COase_Synthase"/>
</dbReference>
<dbReference type="InterPro" id="IPR019797">
    <property type="entry name" value="Glutamate_5-kinase_CS"/>
</dbReference>
<dbReference type="InterPro" id="IPR002478">
    <property type="entry name" value="PUA"/>
</dbReference>
<dbReference type="InterPro" id="IPR015947">
    <property type="entry name" value="PUA-like_sf"/>
</dbReference>
<dbReference type="InterPro" id="IPR036974">
    <property type="entry name" value="PUA_sf"/>
</dbReference>
<dbReference type="NCBIfam" id="TIGR01027">
    <property type="entry name" value="proB"/>
    <property type="match status" value="1"/>
</dbReference>
<dbReference type="PANTHER" id="PTHR43654">
    <property type="entry name" value="GLUTAMATE 5-KINASE"/>
    <property type="match status" value="1"/>
</dbReference>
<dbReference type="PANTHER" id="PTHR43654:SF1">
    <property type="entry name" value="ISOPENTENYL PHOSPHATE KINASE"/>
    <property type="match status" value="1"/>
</dbReference>
<dbReference type="Pfam" id="PF00696">
    <property type="entry name" value="AA_kinase"/>
    <property type="match status" value="1"/>
</dbReference>
<dbReference type="Pfam" id="PF01472">
    <property type="entry name" value="PUA"/>
    <property type="match status" value="1"/>
</dbReference>
<dbReference type="PIRSF" id="PIRSF000729">
    <property type="entry name" value="GK"/>
    <property type="match status" value="1"/>
</dbReference>
<dbReference type="PRINTS" id="PR00474">
    <property type="entry name" value="GLU5KINASE"/>
</dbReference>
<dbReference type="SMART" id="SM00359">
    <property type="entry name" value="PUA"/>
    <property type="match status" value="1"/>
</dbReference>
<dbReference type="SUPFAM" id="SSF53633">
    <property type="entry name" value="Carbamate kinase-like"/>
    <property type="match status" value="1"/>
</dbReference>
<dbReference type="SUPFAM" id="SSF88697">
    <property type="entry name" value="PUA domain-like"/>
    <property type="match status" value="1"/>
</dbReference>
<dbReference type="PROSITE" id="PS00902">
    <property type="entry name" value="GLUTAMATE_5_KINASE"/>
    <property type="match status" value="1"/>
</dbReference>
<dbReference type="PROSITE" id="PS50890">
    <property type="entry name" value="PUA"/>
    <property type="match status" value="1"/>
</dbReference>
<comment type="function">
    <text evidence="1">Catalyzes the transfer of a phosphate group to glutamate to form L-glutamate 5-phosphate.</text>
</comment>
<comment type="catalytic activity">
    <reaction evidence="1">
        <text>L-glutamate + ATP = L-glutamyl 5-phosphate + ADP</text>
        <dbReference type="Rhea" id="RHEA:14877"/>
        <dbReference type="ChEBI" id="CHEBI:29985"/>
        <dbReference type="ChEBI" id="CHEBI:30616"/>
        <dbReference type="ChEBI" id="CHEBI:58274"/>
        <dbReference type="ChEBI" id="CHEBI:456216"/>
        <dbReference type="EC" id="2.7.2.11"/>
    </reaction>
</comment>
<comment type="pathway">
    <text evidence="1">Amino-acid biosynthesis; L-proline biosynthesis; L-glutamate 5-semialdehyde from L-glutamate: step 1/2.</text>
</comment>
<comment type="subcellular location">
    <subcellularLocation>
        <location evidence="1">Cytoplasm</location>
    </subcellularLocation>
</comment>
<comment type="similarity">
    <text evidence="1">Belongs to the glutamate 5-kinase family.</text>
</comment>
<evidence type="ECO:0000255" key="1">
    <source>
        <dbReference type="HAMAP-Rule" id="MF_00456"/>
    </source>
</evidence>
<sequence>MTGIPPPSRFPEQPIPPWRRAVLKVGSSLLAADGGGLSPRFALDLAHFVSANITAGRQLVIVSSGAVAAGRALIPPLPESGGALAARQALAALGQAQLIALWQRFFDRPVAQVLLTHDDLRNRRRYLNARATLRELLHLGTLPVVNENDTVSVDELKLGDNDNLAAIVAALIDAQALFIATDIDGLYTTDPRHHSDAQPLHEVRTLTPENLAMAGDSSSTVGTGGMRTKLEAALKAGAAGIDTYLFNGRSSDVVRGLAQHRLRGTRIHPTCTPIAARKYWLRHAPVEPGAILIDAGAAAALAQQGASLLPGGVLSAEGDFRRGDMIQIATRSPDHPSHPLARGLVQYSAADVRRIAGCHSRDIQTLLGYTYGDTIVHRDDLVLL</sequence>
<name>PROB_XYLF2</name>
<keyword id="KW-0028">Amino-acid biosynthesis</keyword>
<keyword id="KW-0067">ATP-binding</keyword>
<keyword id="KW-0963">Cytoplasm</keyword>
<keyword id="KW-0418">Kinase</keyword>
<keyword id="KW-0547">Nucleotide-binding</keyword>
<keyword id="KW-0641">Proline biosynthesis</keyword>
<keyword id="KW-0808">Transferase</keyword>
<gene>
    <name evidence="1" type="primary">proB</name>
    <name type="ordered locus">XfasM23_0290</name>
</gene>